<dbReference type="EC" id="7.1.2.2" evidence="1"/>
<dbReference type="EMBL" id="CP000941">
    <property type="protein sequence ID" value="ACA11496.1"/>
    <property type="molecule type" value="Genomic_DNA"/>
</dbReference>
<dbReference type="RefSeq" id="WP_012337681.1">
    <property type="nucleotide sequence ID" value="NC_010513.1"/>
</dbReference>
<dbReference type="SMR" id="B0U5A0"/>
<dbReference type="KEGG" id="xfm:Xfasm12_0487"/>
<dbReference type="HOGENOM" id="CLU_010091_2_1_6"/>
<dbReference type="GO" id="GO:0005886">
    <property type="term" value="C:plasma membrane"/>
    <property type="evidence" value="ECO:0007669"/>
    <property type="project" value="UniProtKB-SubCell"/>
</dbReference>
<dbReference type="GO" id="GO:0045259">
    <property type="term" value="C:proton-transporting ATP synthase complex"/>
    <property type="evidence" value="ECO:0007669"/>
    <property type="project" value="UniProtKB-KW"/>
</dbReference>
<dbReference type="GO" id="GO:0043531">
    <property type="term" value="F:ADP binding"/>
    <property type="evidence" value="ECO:0007669"/>
    <property type="project" value="TreeGrafter"/>
</dbReference>
<dbReference type="GO" id="GO:0005524">
    <property type="term" value="F:ATP binding"/>
    <property type="evidence" value="ECO:0007669"/>
    <property type="project" value="UniProtKB-UniRule"/>
</dbReference>
<dbReference type="GO" id="GO:0046933">
    <property type="term" value="F:proton-transporting ATP synthase activity, rotational mechanism"/>
    <property type="evidence" value="ECO:0007669"/>
    <property type="project" value="UniProtKB-UniRule"/>
</dbReference>
<dbReference type="CDD" id="cd18113">
    <property type="entry name" value="ATP-synt_F1_alpha_C"/>
    <property type="match status" value="1"/>
</dbReference>
<dbReference type="CDD" id="cd18116">
    <property type="entry name" value="ATP-synt_F1_alpha_N"/>
    <property type="match status" value="1"/>
</dbReference>
<dbReference type="CDD" id="cd01132">
    <property type="entry name" value="F1-ATPase_alpha_CD"/>
    <property type="match status" value="1"/>
</dbReference>
<dbReference type="FunFam" id="1.20.150.20:FF:000001">
    <property type="entry name" value="ATP synthase subunit alpha"/>
    <property type="match status" value="1"/>
</dbReference>
<dbReference type="FunFam" id="2.40.30.20:FF:000001">
    <property type="entry name" value="ATP synthase subunit alpha"/>
    <property type="match status" value="1"/>
</dbReference>
<dbReference type="FunFam" id="3.40.50.300:FF:000002">
    <property type="entry name" value="ATP synthase subunit alpha"/>
    <property type="match status" value="1"/>
</dbReference>
<dbReference type="Gene3D" id="2.40.30.20">
    <property type="match status" value="1"/>
</dbReference>
<dbReference type="Gene3D" id="1.20.150.20">
    <property type="entry name" value="ATP synthase alpha/beta chain, C-terminal domain"/>
    <property type="match status" value="1"/>
</dbReference>
<dbReference type="Gene3D" id="3.40.50.300">
    <property type="entry name" value="P-loop containing nucleotide triphosphate hydrolases"/>
    <property type="match status" value="1"/>
</dbReference>
<dbReference type="HAMAP" id="MF_01346">
    <property type="entry name" value="ATP_synth_alpha_bact"/>
    <property type="match status" value="1"/>
</dbReference>
<dbReference type="InterPro" id="IPR023366">
    <property type="entry name" value="ATP_synth_asu-like_sf"/>
</dbReference>
<dbReference type="InterPro" id="IPR000793">
    <property type="entry name" value="ATP_synth_asu_C"/>
</dbReference>
<dbReference type="InterPro" id="IPR038376">
    <property type="entry name" value="ATP_synth_asu_C_sf"/>
</dbReference>
<dbReference type="InterPro" id="IPR033732">
    <property type="entry name" value="ATP_synth_F1_a_nt-bd_dom"/>
</dbReference>
<dbReference type="InterPro" id="IPR005294">
    <property type="entry name" value="ATP_synth_F1_asu"/>
</dbReference>
<dbReference type="InterPro" id="IPR020003">
    <property type="entry name" value="ATPase_a/bsu_AS"/>
</dbReference>
<dbReference type="InterPro" id="IPR004100">
    <property type="entry name" value="ATPase_F1/V1/A1_a/bsu_N"/>
</dbReference>
<dbReference type="InterPro" id="IPR036121">
    <property type="entry name" value="ATPase_F1/V1/A1_a/bsu_N_sf"/>
</dbReference>
<dbReference type="InterPro" id="IPR000194">
    <property type="entry name" value="ATPase_F1/V1/A1_a/bsu_nucl-bd"/>
</dbReference>
<dbReference type="InterPro" id="IPR027417">
    <property type="entry name" value="P-loop_NTPase"/>
</dbReference>
<dbReference type="NCBIfam" id="TIGR00962">
    <property type="entry name" value="atpA"/>
    <property type="match status" value="1"/>
</dbReference>
<dbReference type="NCBIfam" id="NF009884">
    <property type="entry name" value="PRK13343.1"/>
    <property type="match status" value="1"/>
</dbReference>
<dbReference type="PANTHER" id="PTHR48082">
    <property type="entry name" value="ATP SYNTHASE SUBUNIT ALPHA, MITOCHONDRIAL"/>
    <property type="match status" value="1"/>
</dbReference>
<dbReference type="PANTHER" id="PTHR48082:SF2">
    <property type="entry name" value="ATP SYNTHASE SUBUNIT ALPHA, MITOCHONDRIAL"/>
    <property type="match status" value="1"/>
</dbReference>
<dbReference type="Pfam" id="PF00006">
    <property type="entry name" value="ATP-synt_ab"/>
    <property type="match status" value="1"/>
</dbReference>
<dbReference type="Pfam" id="PF00306">
    <property type="entry name" value="ATP-synt_ab_C"/>
    <property type="match status" value="1"/>
</dbReference>
<dbReference type="Pfam" id="PF02874">
    <property type="entry name" value="ATP-synt_ab_N"/>
    <property type="match status" value="1"/>
</dbReference>
<dbReference type="SUPFAM" id="SSF47917">
    <property type="entry name" value="C-terminal domain of alpha and beta subunits of F1 ATP synthase"/>
    <property type="match status" value="1"/>
</dbReference>
<dbReference type="SUPFAM" id="SSF50615">
    <property type="entry name" value="N-terminal domain of alpha and beta subunits of F1 ATP synthase"/>
    <property type="match status" value="1"/>
</dbReference>
<dbReference type="SUPFAM" id="SSF52540">
    <property type="entry name" value="P-loop containing nucleoside triphosphate hydrolases"/>
    <property type="match status" value="1"/>
</dbReference>
<dbReference type="PROSITE" id="PS00152">
    <property type="entry name" value="ATPASE_ALPHA_BETA"/>
    <property type="match status" value="1"/>
</dbReference>
<feature type="chain" id="PRO_1000143456" description="ATP synthase subunit alpha">
    <location>
        <begin position="1"/>
        <end position="515"/>
    </location>
</feature>
<feature type="binding site" evidence="1">
    <location>
        <begin position="171"/>
        <end position="178"/>
    </location>
    <ligand>
        <name>ATP</name>
        <dbReference type="ChEBI" id="CHEBI:30616"/>
    </ligand>
</feature>
<feature type="site" description="Required for activity" evidence="1">
    <location>
        <position position="375"/>
    </location>
</feature>
<protein>
    <recommendedName>
        <fullName evidence="1">ATP synthase subunit alpha</fullName>
        <ecNumber evidence="1">7.1.2.2</ecNumber>
    </recommendedName>
    <alternativeName>
        <fullName evidence="1">ATP synthase F1 sector subunit alpha</fullName>
    </alternativeName>
    <alternativeName>
        <fullName evidence="1">F-ATPase subunit alpha</fullName>
    </alternativeName>
</protein>
<keyword id="KW-0066">ATP synthesis</keyword>
<keyword id="KW-0067">ATP-binding</keyword>
<keyword id="KW-0997">Cell inner membrane</keyword>
<keyword id="KW-1003">Cell membrane</keyword>
<keyword id="KW-0139">CF(1)</keyword>
<keyword id="KW-0375">Hydrogen ion transport</keyword>
<keyword id="KW-0406">Ion transport</keyword>
<keyword id="KW-0472">Membrane</keyword>
<keyword id="KW-0547">Nucleotide-binding</keyword>
<keyword id="KW-1278">Translocase</keyword>
<keyword id="KW-0813">Transport</keyword>
<organism>
    <name type="scientific">Xylella fastidiosa (strain M12)</name>
    <dbReference type="NCBI Taxonomy" id="405440"/>
    <lineage>
        <taxon>Bacteria</taxon>
        <taxon>Pseudomonadati</taxon>
        <taxon>Pseudomonadota</taxon>
        <taxon>Gammaproteobacteria</taxon>
        <taxon>Lysobacterales</taxon>
        <taxon>Lysobacteraceae</taxon>
        <taxon>Xylella</taxon>
    </lineage>
</organism>
<reference key="1">
    <citation type="journal article" date="2010" name="J. Bacteriol.">
        <title>Whole genome sequences of two Xylella fastidiosa strains (M12 and M23) causing almond leaf scorch disease in California.</title>
        <authorList>
            <person name="Chen J."/>
            <person name="Xie G."/>
            <person name="Han S."/>
            <person name="Chertkov O."/>
            <person name="Sims D."/>
            <person name="Civerolo E.L."/>
        </authorList>
    </citation>
    <scope>NUCLEOTIDE SEQUENCE [LARGE SCALE GENOMIC DNA]</scope>
    <source>
        <strain>M12</strain>
    </source>
</reference>
<evidence type="ECO:0000255" key="1">
    <source>
        <dbReference type="HAMAP-Rule" id="MF_01346"/>
    </source>
</evidence>
<accession>B0U5A0</accession>
<name>ATPA_XYLFM</name>
<gene>
    <name evidence="1" type="primary">atpA</name>
    <name type="ordered locus">Xfasm12_0487</name>
</gene>
<comment type="function">
    <text evidence="1">Produces ATP from ADP in the presence of a proton gradient across the membrane. The alpha chain is a regulatory subunit.</text>
</comment>
<comment type="catalytic activity">
    <reaction evidence="1">
        <text>ATP + H2O + 4 H(+)(in) = ADP + phosphate + 5 H(+)(out)</text>
        <dbReference type="Rhea" id="RHEA:57720"/>
        <dbReference type="ChEBI" id="CHEBI:15377"/>
        <dbReference type="ChEBI" id="CHEBI:15378"/>
        <dbReference type="ChEBI" id="CHEBI:30616"/>
        <dbReference type="ChEBI" id="CHEBI:43474"/>
        <dbReference type="ChEBI" id="CHEBI:456216"/>
        <dbReference type="EC" id="7.1.2.2"/>
    </reaction>
</comment>
<comment type="subunit">
    <text evidence="1">F-type ATPases have 2 components, CF(1) - the catalytic core - and CF(0) - the membrane proton channel. CF(1) has five subunits: alpha(3), beta(3), gamma(1), delta(1), epsilon(1). CF(0) has three main subunits: a(1), b(2) and c(9-12). The alpha and beta chains form an alternating ring which encloses part of the gamma chain. CF(1) is attached to CF(0) by a central stalk formed by the gamma and epsilon chains, while a peripheral stalk is formed by the delta and b chains.</text>
</comment>
<comment type="subcellular location">
    <subcellularLocation>
        <location evidence="1">Cell inner membrane</location>
        <topology evidence="1">Peripheral membrane protein</topology>
    </subcellularLocation>
</comment>
<comment type="similarity">
    <text evidence="1">Belongs to the ATPase alpha/beta chains family.</text>
</comment>
<sequence length="515" mass="55964">MATTLNPSEISELIKTRIEQVKLSAESRNEGTVTSVSDGIVRIFGLADAMQGEMIELPNKTYALALNLERDSVGAVILGDYKHLREGDVAKTTGRILEVPVGKSLLGRVVNALGEPIDGKGTLGPTQTAPVERVAPGVIWRKSVDQPVQTGYKSVDAMIPIGRGQRELIIGDRQTGKTAMAIDTVISQKDTGIKCVYVAIGQKASTIANIVRKLEENDALDHTIVVAATASESAALQYISAYAGCTMGEYFMDRGEDALIIYDDLSKQAVAYRQISLLLKRPPGREAYPGDVFYLHSRLLERAARVSEEYVEKFTQGEVKGKTGSLTALPIIETQAGDVSAFVPTNVISITDGQIFLETDLFNAGIRPAVNAGISVSRVGGSAQTKIIKKLSGGIRISLAQYRELAAFAQFASDLDETTRKQLERGQRVTELMKQKQYTSMSVANQALSIYAVNEGYLDDIPVDKVLTFEEGLHAHFSNTQGALIDKINNSGDWDNNIEAAFKQHIEEFKTTGSW</sequence>
<proteinExistence type="inferred from homology"/>